<organism>
    <name type="scientific">Arabidopsis thaliana</name>
    <name type="common">Mouse-ear cress</name>
    <dbReference type="NCBI Taxonomy" id="3702"/>
    <lineage>
        <taxon>Eukaryota</taxon>
        <taxon>Viridiplantae</taxon>
        <taxon>Streptophyta</taxon>
        <taxon>Embryophyta</taxon>
        <taxon>Tracheophyta</taxon>
        <taxon>Spermatophyta</taxon>
        <taxon>Magnoliopsida</taxon>
        <taxon>eudicotyledons</taxon>
        <taxon>Gunneridae</taxon>
        <taxon>Pentapetalae</taxon>
        <taxon>rosids</taxon>
        <taxon>malvids</taxon>
        <taxon>Brassicales</taxon>
        <taxon>Brassicaceae</taxon>
        <taxon>Camelineae</taxon>
        <taxon>Arabidopsis</taxon>
    </lineage>
</organism>
<reference key="1">
    <citation type="journal article" date="1998" name="Nature">
        <title>Analysis of 1.9 Mb of contiguous sequence from chromosome 4 of Arabidopsis thaliana.</title>
        <authorList>
            <person name="Bevan M."/>
            <person name="Bancroft I."/>
            <person name="Bent E."/>
            <person name="Love K."/>
            <person name="Goodman H.M."/>
            <person name="Dean C."/>
            <person name="Bergkamp R."/>
            <person name="Dirkse W."/>
            <person name="van Staveren M."/>
            <person name="Stiekema W."/>
            <person name="Drost L."/>
            <person name="Ridley P."/>
            <person name="Hudson S.-A."/>
            <person name="Patel K."/>
            <person name="Murphy G."/>
            <person name="Piffanelli P."/>
            <person name="Wedler H."/>
            <person name="Wedler E."/>
            <person name="Wambutt R."/>
            <person name="Weitzenegger T."/>
            <person name="Pohl T."/>
            <person name="Terryn N."/>
            <person name="Gielen J."/>
            <person name="Villarroel R."/>
            <person name="De Clercq R."/>
            <person name="van Montagu M."/>
            <person name="Lecharny A."/>
            <person name="Aubourg S."/>
            <person name="Gy I."/>
            <person name="Kreis M."/>
            <person name="Lao N."/>
            <person name="Kavanagh T."/>
            <person name="Hempel S."/>
            <person name="Kotter P."/>
            <person name="Entian K.-D."/>
            <person name="Rieger M."/>
            <person name="Schaefer M."/>
            <person name="Funk B."/>
            <person name="Mueller-Auer S."/>
            <person name="Silvey M."/>
            <person name="James R."/>
            <person name="Monfort A."/>
            <person name="Pons A."/>
            <person name="Puigdomenech P."/>
            <person name="Douka A."/>
            <person name="Voukelatou E."/>
            <person name="Milioni D."/>
            <person name="Hatzopoulos P."/>
            <person name="Piravandi E."/>
            <person name="Obermaier B."/>
            <person name="Hilbert H."/>
            <person name="Duesterhoeft A."/>
            <person name="Moores T."/>
            <person name="Jones J.D.G."/>
            <person name="Eneva T."/>
            <person name="Palme K."/>
            <person name="Benes V."/>
            <person name="Rechmann S."/>
            <person name="Ansorge W."/>
            <person name="Cooke R."/>
            <person name="Berger C."/>
            <person name="Delseny M."/>
            <person name="Voet M."/>
            <person name="Volckaert G."/>
            <person name="Mewes H.-W."/>
            <person name="Klosterman S."/>
            <person name="Schueller C."/>
            <person name="Chalwatzis N."/>
        </authorList>
    </citation>
    <scope>NUCLEOTIDE SEQUENCE [LARGE SCALE GENOMIC DNA]</scope>
    <source>
        <strain>cv. Columbia</strain>
    </source>
</reference>
<reference key="2">
    <citation type="journal article" date="1999" name="Nature">
        <title>Sequence and analysis of chromosome 4 of the plant Arabidopsis thaliana.</title>
        <authorList>
            <person name="Mayer K.F.X."/>
            <person name="Schueller C."/>
            <person name="Wambutt R."/>
            <person name="Murphy G."/>
            <person name="Volckaert G."/>
            <person name="Pohl T."/>
            <person name="Duesterhoeft A."/>
            <person name="Stiekema W."/>
            <person name="Entian K.-D."/>
            <person name="Terryn N."/>
            <person name="Harris B."/>
            <person name="Ansorge W."/>
            <person name="Brandt P."/>
            <person name="Grivell L.A."/>
            <person name="Rieger M."/>
            <person name="Weichselgartner M."/>
            <person name="de Simone V."/>
            <person name="Obermaier B."/>
            <person name="Mache R."/>
            <person name="Mueller M."/>
            <person name="Kreis M."/>
            <person name="Delseny M."/>
            <person name="Puigdomenech P."/>
            <person name="Watson M."/>
            <person name="Schmidtheini T."/>
            <person name="Reichert B."/>
            <person name="Portetelle D."/>
            <person name="Perez-Alonso M."/>
            <person name="Boutry M."/>
            <person name="Bancroft I."/>
            <person name="Vos P."/>
            <person name="Hoheisel J."/>
            <person name="Zimmermann W."/>
            <person name="Wedler H."/>
            <person name="Ridley P."/>
            <person name="Langham S.-A."/>
            <person name="McCullagh B."/>
            <person name="Bilham L."/>
            <person name="Robben J."/>
            <person name="van der Schueren J."/>
            <person name="Grymonprez B."/>
            <person name="Chuang Y.-J."/>
            <person name="Vandenbussche F."/>
            <person name="Braeken M."/>
            <person name="Weltjens I."/>
            <person name="Voet M."/>
            <person name="Bastiaens I."/>
            <person name="Aert R."/>
            <person name="Defoor E."/>
            <person name="Weitzenegger T."/>
            <person name="Bothe G."/>
            <person name="Ramsperger U."/>
            <person name="Hilbert H."/>
            <person name="Braun M."/>
            <person name="Holzer E."/>
            <person name="Brandt A."/>
            <person name="Peters S."/>
            <person name="van Staveren M."/>
            <person name="Dirkse W."/>
            <person name="Mooijman P."/>
            <person name="Klein Lankhorst R."/>
            <person name="Rose M."/>
            <person name="Hauf J."/>
            <person name="Koetter P."/>
            <person name="Berneiser S."/>
            <person name="Hempel S."/>
            <person name="Feldpausch M."/>
            <person name="Lamberth S."/>
            <person name="Van den Daele H."/>
            <person name="De Keyser A."/>
            <person name="Buysshaert C."/>
            <person name="Gielen J."/>
            <person name="Villarroel R."/>
            <person name="De Clercq R."/>
            <person name="van Montagu M."/>
            <person name="Rogers J."/>
            <person name="Cronin A."/>
            <person name="Quail M.A."/>
            <person name="Bray-Allen S."/>
            <person name="Clark L."/>
            <person name="Doggett J."/>
            <person name="Hall S."/>
            <person name="Kay M."/>
            <person name="Lennard N."/>
            <person name="McLay K."/>
            <person name="Mayes R."/>
            <person name="Pettett A."/>
            <person name="Rajandream M.A."/>
            <person name="Lyne M."/>
            <person name="Benes V."/>
            <person name="Rechmann S."/>
            <person name="Borkova D."/>
            <person name="Bloecker H."/>
            <person name="Scharfe M."/>
            <person name="Grimm M."/>
            <person name="Loehnert T.-H."/>
            <person name="Dose S."/>
            <person name="de Haan M."/>
            <person name="Maarse A.C."/>
            <person name="Schaefer M."/>
            <person name="Mueller-Auer S."/>
            <person name="Gabel C."/>
            <person name="Fuchs M."/>
            <person name="Fartmann B."/>
            <person name="Granderath K."/>
            <person name="Dauner D."/>
            <person name="Herzl A."/>
            <person name="Neumann S."/>
            <person name="Argiriou A."/>
            <person name="Vitale D."/>
            <person name="Liguori R."/>
            <person name="Piravandi E."/>
            <person name="Massenet O."/>
            <person name="Quigley F."/>
            <person name="Clabauld G."/>
            <person name="Muendlein A."/>
            <person name="Felber R."/>
            <person name="Schnabl S."/>
            <person name="Hiller R."/>
            <person name="Schmidt W."/>
            <person name="Lecharny A."/>
            <person name="Aubourg S."/>
            <person name="Chefdor F."/>
            <person name="Cooke R."/>
            <person name="Berger C."/>
            <person name="Monfort A."/>
            <person name="Casacuberta E."/>
            <person name="Gibbons T."/>
            <person name="Weber N."/>
            <person name="Vandenbol M."/>
            <person name="Bargues M."/>
            <person name="Terol J."/>
            <person name="Torres A."/>
            <person name="Perez-Perez A."/>
            <person name="Purnelle B."/>
            <person name="Bent E."/>
            <person name="Johnson S."/>
            <person name="Tacon D."/>
            <person name="Jesse T."/>
            <person name="Heijnen L."/>
            <person name="Schwarz S."/>
            <person name="Scholler P."/>
            <person name="Heber S."/>
            <person name="Francs P."/>
            <person name="Bielke C."/>
            <person name="Frishman D."/>
            <person name="Haase D."/>
            <person name="Lemcke K."/>
            <person name="Mewes H.-W."/>
            <person name="Stocker S."/>
            <person name="Zaccaria P."/>
            <person name="Bevan M."/>
            <person name="Wilson R.K."/>
            <person name="de la Bastide M."/>
            <person name="Habermann K."/>
            <person name="Parnell L."/>
            <person name="Dedhia N."/>
            <person name="Gnoj L."/>
            <person name="Schutz K."/>
            <person name="Huang E."/>
            <person name="Spiegel L."/>
            <person name="Sekhon M."/>
            <person name="Murray J."/>
            <person name="Sheet P."/>
            <person name="Cordes M."/>
            <person name="Abu-Threideh J."/>
            <person name="Stoneking T."/>
            <person name="Kalicki J."/>
            <person name="Graves T."/>
            <person name="Harmon G."/>
            <person name="Edwards J."/>
            <person name="Latreille P."/>
            <person name="Courtney L."/>
            <person name="Cloud J."/>
            <person name="Abbott A."/>
            <person name="Scott K."/>
            <person name="Johnson D."/>
            <person name="Minx P."/>
            <person name="Bentley D."/>
            <person name="Fulton B."/>
            <person name="Miller N."/>
            <person name="Greco T."/>
            <person name="Kemp K."/>
            <person name="Kramer J."/>
            <person name="Fulton L."/>
            <person name="Mardis E."/>
            <person name="Dante M."/>
            <person name="Pepin K."/>
            <person name="Hillier L.W."/>
            <person name="Nelson J."/>
            <person name="Spieth J."/>
            <person name="Ryan E."/>
            <person name="Andrews S."/>
            <person name="Geisel C."/>
            <person name="Layman D."/>
            <person name="Du H."/>
            <person name="Ali J."/>
            <person name="Berghoff A."/>
            <person name="Jones K."/>
            <person name="Drone K."/>
            <person name="Cotton M."/>
            <person name="Joshu C."/>
            <person name="Antonoiu B."/>
            <person name="Zidanic M."/>
            <person name="Strong C."/>
            <person name="Sun H."/>
            <person name="Lamar B."/>
            <person name="Yordan C."/>
            <person name="Ma P."/>
            <person name="Zhong J."/>
            <person name="Preston R."/>
            <person name="Vil D."/>
            <person name="Shekher M."/>
            <person name="Matero A."/>
            <person name="Shah R."/>
            <person name="Swaby I.K."/>
            <person name="O'Shaughnessy A."/>
            <person name="Rodriguez M."/>
            <person name="Hoffman J."/>
            <person name="Till S."/>
            <person name="Granat S."/>
            <person name="Shohdy N."/>
            <person name="Hasegawa A."/>
            <person name="Hameed A."/>
            <person name="Lodhi M."/>
            <person name="Johnson A."/>
            <person name="Chen E."/>
            <person name="Marra M.A."/>
            <person name="Martienssen R."/>
            <person name="McCombie W.R."/>
        </authorList>
    </citation>
    <scope>NUCLEOTIDE SEQUENCE [LARGE SCALE GENOMIC DNA]</scope>
    <source>
        <strain>cv. Columbia</strain>
    </source>
</reference>
<reference key="3">
    <citation type="journal article" date="2017" name="Plant J.">
        <title>Araport11: a complete reannotation of the Arabidopsis thaliana reference genome.</title>
        <authorList>
            <person name="Cheng C.Y."/>
            <person name="Krishnakumar V."/>
            <person name="Chan A.P."/>
            <person name="Thibaud-Nissen F."/>
            <person name="Schobel S."/>
            <person name="Town C.D."/>
        </authorList>
    </citation>
    <scope>GENOME REANNOTATION</scope>
    <source>
        <strain>cv. Columbia</strain>
    </source>
</reference>
<reference key="4">
    <citation type="journal article" date="1997" name="Gene">
        <title>Structure, organization and putative function of the genes identified within a 23.9 kb fragment from Arabidopsis thaliana chromosome IV sequenced in the framework of the ESSA programme.</title>
        <authorList>
            <person name="Aubourg S."/>
            <person name="Takvorian A."/>
            <person name="Cheron A."/>
            <person name="Kreis M."/>
            <person name="Lecharny A."/>
        </authorList>
    </citation>
    <scope>NUCLEOTIDE SEQUENCE [GENOMIC DNA] OF 628-1299</scope>
    <source>
        <strain>cv. Columbia</strain>
        <tissue>Green siliques</tissue>
    </source>
</reference>
<reference key="5">
    <citation type="journal article" date="2012" name="Genes Dev.">
        <title>Condensins: universal organizers of chromosomes with diverse functions.</title>
        <authorList>
            <person name="Hirano T."/>
        </authorList>
    </citation>
    <scope>REVIEW</scope>
</reference>
<reference key="6">
    <citation type="journal article" date="2013" name="Chromosoma">
        <title>The Arabidopsis CAP-D proteins are required for correct chromatin organisation, growth and fertility.</title>
        <authorList>
            <person name="Schubert V."/>
            <person name="Lermontova I."/>
            <person name="Schubert I."/>
        </authorList>
    </citation>
    <scope>FUNCTION</scope>
    <scope>DISRUPTION PHENOTYPE</scope>
    <scope>DEVELOPMENTAL STAGE</scope>
    <scope>INDUCTION</scope>
    <scope>SUBCELLULAR LOCATION</scope>
    <source>
        <strain>cv. Columbia</strain>
    </source>
</reference>
<reference key="7">
    <citation type="journal article" date="2014" name="Plant J.">
        <title>The condensin complexes play distinct roles to ensure normal chromosome morphogenesis during meiotic division in Arabidopsis.</title>
        <authorList>
            <person name="Smith S.J."/>
            <person name="Osman K."/>
            <person name="Franklin F.C."/>
        </authorList>
    </citation>
    <scope>FUNCTION</scope>
    <scope>DISRUPTION PHENOTYPE</scope>
    <scope>TISSUE SPECIFICITY</scope>
    <scope>SUBCELLULAR LOCATION</scope>
    <source>
        <strain>cv. Columbia</strain>
    </source>
</reference>
<reference key="8">
    <citation type="journal article" date="2016" name="Plant Cell">
        <title>The PHD Finger Protein MMD1/DUET Ensures the Progression of Male Meiotic Chromosome Condensation and Directly Regulates the Expression of the Condensin Gene CAP-D3.</title>
        <authorList>
            <person name="Wang J."/>
            <person name="Niu B."/>
            <person name="Huang J."/>
            <person name="Wang H."/>
            <person name="Yang X."/>
            <person name="Dong A."/>
            <person name="Makaroff C."/>
            <person name="Ma H."/>
            <person name="Wang Y."/>
        </authorList>
    </citation>
    <scope>FUNCTION</scope>
    <scope>DISRUPTION PHENOTYPE</scope>
    <scope>INDUCTION BY MMD1</scope>
    <scope>SUBCELLULAR LOCATION</scope>
</reference>
<name>CNDD3_ARATH</name>
<sequence>MDEELLLTRILAGIEGGDDESDYHELVTDLKSLLDTDDDEILNRFYGSLSSMASSFLRCISAAMDSPVESGRLAILASDAYLSLLLSTNCPVFTFFSPIAFLSLLGSIRRYLKRRDDSAGQGSNSQREKGNKKKRGRGKRNLGYEDGEETEEGGFDAKLMFIVLEKLGSVLSFVHLDRFPDSLKSLVQTVSEIPLLALEHSGVLNYDRLMEMCGKILGGVLNSDHGDMALTAAEISKSLTPLLLMGKHQARSFALGFVSRKLMSLAKDNPELKKVVSNLPKFLVHKAPEKAEPRGFAVEAVLEIVKAMEVEGQSEFVDFVMKMCQGKSNFRVLAVDIIPLLISSLGNPLGDISSENGLKDSWGLGCIDALVQRCSDTSALIRARALSNLAQVVEFLSGDERSRSILKQALGFNGETSEGKGAVTDLLKKRCVDEKAAVRRAALLLVTKLTSLMGGCFDGSILKTMGTSCSDPLISIRKAAVSAISEAFRICTDEIVTTEWLHSVPRMIMDNETSIQEECENVFHELVLERILRAGNVLSPDSASLPNNRNTTSKDLDRDIEALFPEGVLVLLRELCNSEVSPWVTKICGSLGKKKRLKPRVALALQCIIKESESLWLSRSMPINRWTAPAGAWFLLSEVSVYLSKSVEWEFLHHHWQLLDKNDVQGLDEQGDEQGVECNSSTWAGDRVCLLQTISNVSLQLPAEPAADLADNLLKKIENFNLHSAEVDAHVKALKTLCKKKASTSEEADMLVKKWVEQVSLKASKVTEKYIEGVSSHNHSFVTPATLGSRRSKRLDTVSKKLSKAVTAVYTIGSCVIIYPSADTTKIVPFLHTVITSGNSDSKLKNKLPQANVCLKQKAPLLYSQSWLTMAKMCLADGKLAKRYLPLFAQELEKSDCAALRNNLVVAMTDFCVHYTAMIECYIPKITKRLRDPCEVVRRQTFILLSRLLQRDYVKWRGVLFLRFLLSLVDESEKIRRLADFLFGSILKVKAPLLAYNSFVEAIYVLNDCHAHTGHSNPDSKQSRTKDQVFSIRGNDERARSKRMQIYVTLLKQMAPEHLLATFAKLCAEILAAASDGMLNIEDVTGQSVLQDAFQILACKEIRLSVSRGASSETADIEEEGGDAATAKGRAITHAVRKGLIQNTIPIFIELKRLLESKNSPLTGSLMDCLRVLLKDYKNEIEEMLVADKQLQKELVYDMQKHEAAKARSMANQGVACGTSHRNGEPEASAASEENVRDSGLESRVVSAAADVVAAKAARSVLREVNGGAATPPLSAMSVPKLRSSRGVSQSGRPSADVLESLRRRPTFMSDDES</sequence>
<evidence type="ECO:0000250" key="1">
    <source>
        <dbReference type="UniProtKB" id="P42695"/>
    </source>
</evidence>
<evidence type="ECO:0000255" key="2"/>
<evidence type="ECO:0000255" key="3">
    <source>
        <dbReference type="PROSITE-ProRule" id="PRU00768"/>
    </source>
</evidence>
<evidence type="ECO:0000256" key="4">
    <source>
        <dbReference type="SAM" id="MobiDB-lite"/>
    </source>
</evidence>
<evidence type="ECO:0000269" key="5">
    <source>
    </source>
</evidence>
<evidence type="ECO:0000269" key="6">
    <source>
    </source>
</evidence>
<evidence type="ECO:0000269" key="7">
    <source>
    </source>
</evidence>
<evidence type="ECO:0000303" key="8">
    <source>
    </source>
</evidence>
<evidence type="ECO:0000303" key="9">
    <source>
    </source>
</evidence>
<evidence type="ECO:0000305" key="10"/>
<evidence type="ECO:0000312" key="11">
    <source>
        <dbReference type="Araport" id="AT4G15890"/>
    </source>
</evidence>
<evidence type="ECO:0000312" key="12">
    <source>
        <dbReference type="EMBL" id="CAA72072.1"/>
    </source>
</evidence>
<evidence type="ECO:0000312" key="13">
    <source>
        <dbReference type="EMBL" id="CAB45995.1"/>
    </source>
</evidence>
<evidence type="ECO:0000312" key="14">
    <source>
        <dbReference type="EMBL" id="CAB78631.1"/>
    </source>
</evidence>
<gene>
    <name evidence="8 9" type="primary">CAP-D3</name>
    <name evidence="11" type="ordered locus">At4g15890</name>
    <name evidence="13" type="ORF">Dl3985W</name>
    <name evidence="14" type="ORF">FCAALL.407</name>
    <name evidence="12" type="ORF">G14587-6</name>
</gene>
<feature type="chain" id="PRO_0000454773" description="Condensin-2 complex subunit CAP-D3">
    <location>
        <begin position="1"/>
        <end position="1314"/>
    </location>
</feature>
<feature type="repeat" description="HEAT 1" evidence="2">
    <location>
        <begin position="20"/>
        <end position="58"/>
    </location>
</feature>
<feature type="repeat" description="HEAT 2" evidence="2">
    <location>
        <begin position="98"/>
        <end position="136"/>
    </location>
</feature>
<feature type="repeat" description="HEAT 3" evidence="2">
    <location>
        <begin position="184"/>
        <end position="222"/>
    </location>
</feature>
<feature type="repeat" description="HEAT 4" evidence="2">
    <location>
        <begin position="231"/>
        <end position="267"/>
    </location>
</feature>
<feature type="repeat" description="HEAT 5" evidence="2">
    <location>
        <begin position="269"/>
        <end position="310"/>
    </location>
</feature>
<feature type="repeat" description="HEAT 6" evidence="2">
    <location>
        <begin position="331"/>
        <end position="360"/>
    </location>
</feature>
<feature type="repeat" description="HEAT 7" evidence="2">
    <location>
        <begin position="361"/>
        <end position="398"/>
    </location>
</feature>
<feature type="repeat" description="HEAT 8" evidence="2">
    <location>
        <begin position="417"/>
        <end position="455"/>
    </location>
</feature>
<feature type="repeat" description="HEAT 9" evidence="2">
    <location>
        <begin position="457"/>
        <end position="493"/>
    </location>
</feature>
<feature type="repeat" description="HEAT 10" evidence="2">
    <location>
        <begin position="494"/>
        <end position="532"/>
    </location>
</feature>
<feature type="repeat" description="HEAT 11" evidence="2">
    <location>
        <begin position="821"/>
        <end position="859"/>
    </location>
</feature>
<feature type="repeat" description="HEAT 12" evidence="2">
    <location>
        <begin position="878"/>
        <end position="916"/>
    </location>
</feature>
<feature type="repeat" description="HEAT 13" evidence="2">
    <location>
        <begin position="917"/>
        <end position="954"/>
    </location>
</feature>
<feature type="repeat" description="HEAT 14" evidence="2">
    <location>
        <begin position="956"/>
        <end position="992"/>
    </location>
</feature>
<feature type="repeat" description="HEAT 15" evidence="2">
    <location>
        <begin position="1053"/>
        <end position="1091"/>
    </location>
</feature>
<feature type="repeat" description="HEAT 16" evidence="2">
    <location>
        <begin position="1138"/>
        <end position="1179"/>
    </location>
</feature>
<feature type="region of interest" description="Disordered" evidence="4">
    <location>
        <begin position="116"/>
        <end position="150"/>
    </location>
</feature>
<feature type="region of interest" description="Disordered" evidence="4">
    <location>
        <begin position="1210"/>
        <end position="1237"/>
    </location>
</feature>
<feature type="region of interest" description="Disordered" evidence="4">
    <location>
        <begin position="1265"/>
        <end position="1314"/>
    </location>
</feature>
<feature type="short sequence motif" description="Nuclear localization signal" evidence="3">
    <location>
        <begin position="789"/>
        <end position="796"/>
    </location>
</feature>
<feature type="compositionally biased region" description="Basic residues" evidence="4">
    <location>
        <begin position="130"/>
        <end position="140"/>
    </location>
</feature>
<feature type="sequence conflict" description="In Ref. 4; CAA72043." evidence="10" ref="4">
    <original>I</original>
    <variation>T</variation>
    <location>
        <position position="1096"/>
    </location>
</feature>
<proteinExistence type="evidence at transcript level"/>
<dbReference type="EMBL" id="Z97339">
    <property type="protein sequence ID" value="CAB45995.1"/>
    <property type="molecule type" value="Genomic_DNA"/>
</dbReference>
<dbReference type="EMBL" id="AL161542">
    <property type="protein sequence ID" value="CAB78631.1"/>
    <property type="molecule type" value="Genomic_DNA"/>
</dbReference>
<dbReference type="EMBL" id="CP002687">
    <property type="protein sequence ID" value="AEE83663.1"/>
    <property type="molecule type" value="Genomic_DNA"/>
</dbReference>
<dbReference type="EMBL" id="Y11156">
    <property type="protein sequence ID" value="CAA72043.1"/>
    <property type="molecule type" value="mRNA"/>
</dbReference>
<dbReference type="EMBL" id="Y11187">
    <property type="protein sequence ID" value="CAA72072.1"/>
    <property type="molecule type" value="Genomic_DNA"/>
</dbReference>
<dbReference type="PIR" id="A85176">
    <property type="entry name" value="A85176"/>
</dbReference>
<dbReference type="PIR" id="F71424">
    <property type="entry name" value="F71424"/>
</dbReference>
<dbReference type="RefSeq" id="NP_193324.1">
    <property type="nucleotide sequence ID" value="NM_117681.3"/>
</dbReference>
<dbReference type="FunCoup" id="O24610">
    <property type="interactions" value="1660"/>
</dbReference>
<dbReference type="STRING" id="3702.O24610"/>
<dbReference type="GlyGen" id="O24610">
    <property type="glycosylation" value="1 site"/>
</dbReference>
<dbReference type="iPTMnet" id="O24610"/>
<dbReference type="PaxDb" id="3702-AT4G15890.1"/>
<dbReference type="ProteomicsDB" id="176936"/>
<dbReference type="EnsemblPlants" id="AT4G15890.1">
    <property type="protein sequence ID" value="AT4G15890.1"/>
    <property type="gene ID" value="AT4G15890"/>
</dbReference>
<dbReference type="GeneID" id="827271"/>
<dbReference type="Gramene" id="AT4G15890.1">
    <property type="protein sequence ID" value="AT4G15890.1"/>
    <property type="gene ID" value="AT4G15890"/>
</dbReference>
<dbReference type="KEGG" id="ath:AT4G15890"/>
<dbReference type="Araport" id="AT4G15890"/>
<dbReference type="TAIR" id="AT4G15890">
    <property type="gene designation" value="CAP-D3"/>
</dbReference>
<dbReference type="eggNOG" id="KOG0413">
    <property type="taxonomic scope" value="Eukaryota"/>
</dbReference>
<dbReference type="HOGENOM" id="CLU_002301_1_0_1"/>
<dbReference type="InParanoid" id="O24610"/>
<dbReference type="OMA" id="RWAGQIM"/>
<dbReference type="PhylomeDB" id="O24610"/>
<dbReference type="PRO" id="PR:O24610"/>
<dbReference type="Proteomes" id="UP000006548">
    <property type="component" value="Chromosome 4"/>
</dbReference>
<dbReference type="ExpressionAtlas" id="O24610">
    <property type="expression patterns" value="baseline and differential"/>
</dbReference>
<dbReference type="GO" id="GO:0000796">
    <property type="term" value="C:condensin complex"/>
    <property type="evidence" value="ECO:0007669"/>
    <property type="project" value="InterPro"/>
</dbReference>
<dbReference type="GO" id="GO:0000791">
    <property type="term" value="C:euchromatin"/>
    <property type="evidence" value="ECO:0000314"/>
    <property type="project" value="UniProtKB"/>
</dbReference>
<dbReference type="GO" id="GO:0005654">
    <property type="term" value="C:nucleoplasm"/>
    <property type="evidence" value="ECO:0000314"/>
    <property type="project" value="UniProtKB"/>
</dbReference>
<dbReference type="GO" id="GO:0051301">
    <property type="term" value="P:cell division"/>
    <property type="evidence" value="ECO:0007669"/>
    <property type="project" value="UniProtKB-KW"/>
</dbReference>
<dbReference type="GO" id="GO:0098653">
    <property type="term" value="P:centromere clustering"/>
    <property type="evidence" value="ECO:0000315"/>
    <property type="project" value="TAIR"/>
</dbReference>
<dbReference type="GO" id="GO:0006325">
    <property type="term" value="P:chromatin organization"/>
    <property type="evidence" value="ECO:0000315"/>
    <property type="project" value="UniProtKB"/>
</dbReference>
<dbReference type="GO" id="GO:0030261">
    <property type="term" value="P:chromosome condensation"/>
    <property type="evidence" value="ECO:0000315"/>
    <property type="project" value="UniProtKB"/>
</dbReference>
<dbReference type="GO" id="GO:0010032">
    <property type="term" value="P:meiotic chromosome condensation"/>
    <property type="evidence" value="ECO:0000315"/>
    <property type="project" value="TAIR"/>
</dbReference>
<dbReference type="GO" id="GO:0009556">
    <property type="term" value="P:microsporogenesis"/>
    <property type="evidence" value="ECO:0000315"/>
    <property type="project" value="TAIR"/>
</dbReference>
<dbReference type="GO" id="GO:0000278">
    <property type="term" value="P:mitotic cell cycle"/>
    <property type="evidence" value="ECO:0000270"/>
    <property type="project" value="UniProtKB"/>
</dbReference>
<dbReference type="GO" id="GO:0007076">
    <property type="term" value="P:mitotic chromosome condensation"/>
    <property type="evidence" value="ECO:0007669"/>
    <property type="project" value="InterPro"/>
</dbReference>
<dbReference type="GO" id="GO:0007062">
    <property type="term" value="P:sister chromatid cohesion"/>
    <property type="evidence" value="ECO:0000315"/>
    <property type="project" value="UniProtKB"/>
</dbReference>
<dbReference type="FunFam" id="1.25.10.10:FF:001155">
    <property type="entry name" value="Condensin-2 complex subunit"/>
    <property type="match status" value="1"/>
</dbReference>
<dbReference type="Gene3D" id="1.25.10.10">
    <property type="entry name" value="Leucine-rich Repeat Variant"/>
    <property type="match status" value="1"/>
</dbReference>
<dbReference type="InterPro" id="IPR011989">
    <property type="entry name" value="ARM-like"/>
</dbReference>
<dbReference type="InterPro" id="IPR016024">
    <property type="entry name" value="ARM-type_fold"/>
</dbReference>
<dbReference type="InterPro" id="IPR026971">
    <property type="entry name" value="CND1/NCAPD3"/>
</dbReference>
<dbReference type="InterPro" id="IPR032682">
    <property type="entry name" value="Cnd1_C"/>
</dbReference>
<dbReference type="InterPro" id="IPR012371">
    <property type="entry name" value="NCAPD3"/>
</dbReference>
<dbReference type="PANTHER" id="PTHR14222">
    <property type="entry name" value="CONDENSIN"/>
    <property type="match status" value="1"/>
</dbReference>
<dbReference type="PANTHER" id="PTHR14222:SF1">
    <property type="entry name" value="CONDENSIN-2 COMPLEX SUBUNIT D3"/>
    <property type="match status" value="1"/>
</dbReference>
<dbReference type="Pfam" id="PF12717">
    <property type="entry name" value="Cnd1"/>
    <property type="match status" value="1"/>
</dbReference>
<dbReference type="PIRSF" id="PIRSF036508">
    <property type="entry name" value="Condns_HCP-6"/>
    <property type="match status" value="1"/>
</dbReference>
<dbReference type="SUPFAM" id="SSF48371">
    <property type="entry name" value="ARM repeat"/>
    <property type="match status" value="1"/>
</dbReference>
<accession>O24610</accession>
<accession>O23639</accession>
<accession>Q7DLS9</accession>
<protein>
    <recommendedName>
        <fullName evidence="8 9">Condensin-2 complex subunit CAP-D3</fullName>
    </recommendedName>
    <alternativeName>
        <fullName evidence="9">Protein CHROMOSOME-ASSOCIATED POLYPEPTIDE D-3</fullName>
        <shortName evidence="9">AtCap-D3</shortName>
    </alternativeName>
</protein>
<comment type="function">
    <text evidence="1 5 6 7">Regulatory subunit of the condensin-2 complex, a complex which establishes mitotic chromosome architecture and is involved in physical rigidity of the chromatid axis (By similarity). May promote the resolution of double-strand DNA catenanes (intertwines) between sister chromatids (By similarity). Required for plant vigor, fertility, chromatin condensation and sister chromatid cohesion both during mitosis and meiosis (PubMed:23929493, PubMed:27385818). Necessary to maintain normal structural integrity of the meiotic chromosomes during the two nuclear divisions of gametogenesis, especially to prevent interchromosome connections at metaphase I (PubMed:25065716). Seems also involved in crossover formation during meiotic prophase I (PubMed:25065716). Prevents centromeric and pericentromeric heterochromatin repeats association (PubMed:23929493).</text>
</comment>
<comment type="subunit">
    <text evidence="1">Component of the condensin-2 complex.</text>
</comment>
<comment type="subcellular location">
    <subcellularLocation>
        <location evidence="3 5 7">Nucleus</location>
    </subcellularLocation>
    <subcellularLocation>
        <location evidence="5 6 7">Chromosome</location>
    </subcellularLocation>
    <text evidence="5 6 7">Observed throughout euchromatic nucleoplasm (PubMed:23929493, PubMed:27385818). Associates with the chromosomes throughout meiosis (PubMed:25065716).</text>
</comment>
<comment type="tissue specificity">
    <text evidence="6">Present in buds.</text>
</comment>
<comment type="developmental stage">
    <text evidence="5">Mostly expressed at bolting, flowering and during seed formation.</text>
</comment>
<comment type="induction">
    <text evidence="5 7">Regulated in a cell cycle-dependent manner with an increase during G2 phase, highest levels in the middle of G2 and a drop during mitosis (PubMed:23929493). Induced by MMD1 (PubMed:27385818).</text>
</comment>
<comment type="disruption phenotype">
    <text evidence="5 6 7">Dwarf plants with small rosette leaves (PubMed:25065716). Reduced pollen fertility and seed set (PubMed:23929493, PubMed:27385818). Lower chromatin density and frequent (peri)centromere association in interphase nuclei as well as impaired sister chromatid cohesion (PubMed:23929493). Altered interphase chromatin architecture in differentiated nuclei (PubMed:23929493). Defect chromosome condensation in male meiocytes and in centromeres orientation (PubMed:27385818). During meiosis, extensive interchromosome connections at metaphase I as well as a slight reduction in crossover formation (PubMed:25065716).</text>
</comment>
<keyword id="KW-0131">Cell cycle</keyword>
<keyword id="KW-0132">Cell division</keyword>
<keyword id="KW-0158">Chromosome</keyword>
<keyword id="KW-0226">DNA condensation</keyword>
<keyword id="KW-0469">Meiosis</keyword>
<keyword id="KW-0498">Mitosis</keyword>
<keyword id="KW-0539">Nucleus</keyword>
<keyword id="KW-1185">Reference proteome</keyword>
<keyword id="KW-0677">Repeat</keyword>